<name>ASSY_PARPJ</name>
<comment type="catalytic activity">
    <reaction evidence="1">
        <text>L-citrulline + L-aspartate + ATP = 2-(N(omega)-L-arginino)succinate + AMP + diphosphate + H(+)</text>
        <dbReference type="Rhea" id="RHEA:10932"/>
        <dbReference type="ChEBI" id="CHEBI:15378"/>
        <dbReference type="ChEBI" id="CHEBI:29991"/>
        <dbReference type="ChEBI" id="CHEBI:30616"/>
        <dbReference type="ChEBI" id="CHEBI:33019"/>
        <dbReference type="ChEBI" id="CHEBI:57472"/>
        <dbReference type="ChEBI" id="CHEBI:57743"/>
        <dbReference type="ChEBI" id="CHEBI:456215"/>
        <dbReference type="EC" id="6.3.4.5"/>
    </reaction>
</comment>
<comment type="pathway">
    <text evidence="1">Amino-acid biosynthesis; L-arginine biosynthesis; L-arginine from L-ornithine and carbamoyl phosphate: step 2/3.</text>
</comment>
<comment type="subunit">
    <text evidence="1">Homotetramer.</text>
</comment>
<comment type="subcellular location">
    <subcellularLocation>
        <location evidence="1">Cytoplasm</location>
    </subcellularLocation>
</comment>
<comment type="similarity">
    <text evidence="1">Belongs to the argininosuccinate synthase family. Type 1 subfamily.</text>
</comment>
<sequence>MSDIKKVVLAYSGGLDTSVILKWLQDNYDAEVVTFTADIGQGEELEPARKKALQLGIKQDNIFIEDLREEFVRDFVFPMFRANTIYEGEYLLGTSIARPLIAKRQIEIARATGAQAVSHGATGKGNDQVRFELGYYALEPGIKVIAPWREWDLLSREKLLAYAEKAGIPIEMKHKQGGAPYSMDANLLHISFEGRHLEDPKAEAEADMWRWTVSPEQAPDQAEYIDIEYEHGDPVAINGKRLSAAEMLTELNRLGGKHGIGRLDLVENRYVGMKSRGCYETPGGTIMLKAHRGIESITLDREVAHLKDDLMARYASLIYNGYWWSPERRAIQVLIDHTQEKVNGWVRVKLYKGSVSVVARDSKETLFDKTIATFDDDGGAYNQADAGGFIKLNALRMRIAENARRQRG</sequence>
<accession>B2SY63</accession>
<keyword id="KW-0028">Amino-acid biosynthesis</keyword>
<keyword id="KW-0055">Arginine biosynthesis</keyword>
<keyword id="KW-0067">ATP-binding</keyword>
<keyword id="KW-0963">Cytoplasm</keyword>
<keyword id="KW-0436">Ligase</keyword>
<keyword id="KW-0547">Nucleotide-binding</keyword>
<gene>
    <name evidence="1" type="primary">argG</name>
    <name type="ordered locus">Bphyt_3206</name>
</gene>
<organism>
    <name type="scientific">Paraburkholderia phytofirmans (strain DSM 17436 / LMG 22146 / PsJN)</name>
    <name type="common">Burkholderia phytofirmans</name>
    <dbReference type="NCBI Taxonomy" id="398527"/>
    <lineage>
        <taxon>Bacteria</taxon>
        <taxon>Pseudomonadati</taxon>
        <taxon>Pseudomonadota</taxon>
        <taxon>Betaproteobacteria</taxon>
        <taxon>Burkholderiales</taxon>
        <taxon>Burkholderiaceae</taxon>
        <taxon>Paraburkholderia</taxon>
    </lineage>
</organism>
<dbReference type="EC" id="6.3.4.5" evidence="1"/>
<dbReference type="EMBL" id="CP001052">
    <property type="protein sequence ID" value="ACD17598.1"/>
    <property type="molecule type" value="Genomic_DNA"/>
</dbReference>
<dbReference type="RefSeq" id="WP_012434168.1">
    <property type="nucleotide sequence ID" value="NC_010681.1"/>
</dbReference>
<dbReference type="SMR" id="B2SY63"/>
<dbReference type="STRING" id="398527.Bphyt_3206"/>
<dbReference type="KEGG" id="bpy:Bphyt_3206"/>
<dbReference type="eggNOG" id="COG0137">
    <property type="taxonomic scope" value="Bacteria"/>
</dbReference>
<dbReference type="HOGENOM" id="CLU_032784_4_2_4"/>
<dbReference type="OrthoDB" id="9801641at2"/>
<dbReference type="UniPathway" id="UPA00068">
    <property type="reaction ID" value="UER00113"/>
</dbReference>
<dbReference type="Proteomes" id="UP000001739">
    <property type="component" value="Chromosome 1"/>
</dbReference>
<dbReference type="GO" id="GO:0005737">
    <property type="term" value="C:cytoplasm"/>
    <property type="evidence" value="ECO:0007669"/>
    <property type="project" value="UniProtKB-SubCell"/>
</dbReference>
<dbReference type="GO" id="GO:0004055">
    <property type="term" value="F:argininosuccinate synthase activity"/>
    <property type="evidence" value="ECO:0007669"/>
    <property type="project" value="UniProtKB-UniRule"/>
</dbReference>
<dbReference type="GO" id="GO:0005524">
    <property type="term" value="F:ATP binding"/>
    <property type="evidence" value="ECO:0007669"/>
    <property type="project" value="UniProtKB-UniRule"/>
</dbReference>
<dbReference type="GO" id="GO:0000053">
    <property type="term" value="P:argininosuccinate metabolic process"/>
    <property type="evidence" value="ECO:0007669"/>
    <property type="project" value="TreeGrafter"/>
</dbReference>
<dbReference type="GO" id="GO:0006526">
    <property type="term" value="P:L-arginine biosynthetic process"/>
    <property type="evidence" value="ECO:0007669"/>
    <property type="project" value="UniProtKB-UniRule"/>
</dbReference>
<dbReference type="GO" id="GO:0000050">
    <property type="term" value="P:urea cycle"/>
    <property type="evidence" value="ECO:0007669"/>
    <property type="project" value="TreeGrafter"/>
</dbReference>
<dbReference type="CDD" id="cd01999">
    <property type="entry name" value="ASS"/>
    <property type="match status" value="1"/>
</dbReference>
<dbReference type="FunFam" id="1.20.5.470:FF:000001">
    <property type="entry name" value="Argininosuccinate synthase"/>
    <property type="match status" value="1"/>
</dbReference>
<dbReference type="FunFam" id="3.40.50.620:FF:000019">
    <property type="entry name" value="Argininosuccinate synthase"/>
    <property type="match status" value="1"/>
</dbReference>
<dbReference type="FunFam" id="3.90.1260.10:FF:000007">
    <property type="entry name" value="Argininosuccinate synthase"/>
    <property type="match status" value="1"/>
</dbReference>
<dbReference type="Gene3D" id="3.90.1260.10">
    <property type="entry name" value="Argininosuccinate synthetase, chain A, domain 2"/>
    <property type="match status" value="1"/>
</dbReference>
<dbReference type="Gene3D" id="3.40.50.620">
    <property type="entry name" value="HUPs"/>
    <property type="match status" value="1"/>
</dbReference>
<dbReference type="Gene3D" id="1.20.5.470">
    <property type="entry name" value="Single helix bin"/>
    <property type="match status" value="1"/>
</dbReference>
<dbReference type="HAMAP" id="MF_00005">
    <property type="entry name" value="Arg_succ_synth_type1"/>
    <property type="match status" value="1"/>
</dbReference>
<dbReference type="InterPro" id="IPR048268">
    <property type="entry name" value="Arginosuc_syn_C"/>
</dbReference>
<dbReference type="InterPro" id="IPR048267">
    <property type="entry name" value="Arginosuc_syn_N"/>
</dbReference>
<dbReference type="InterPro" id="IPR001518">
    <property type="entry name" value="Arginosuc_synth"/>
</dbReference>
<dbReference type="InterPro" id="IPR018223">
    <property type="entry name" value="Arginosuc_synth_CS"/>
</dbReference>
<dbReference type="InterPro" id="IPR023434">
    <property type="entry name" value="Arginosuc_synth_type_1_subfam"/>
</dbReference>
<dbReference type="InterPro" id="IPR024074">
    <property type="entry name" value="AS_cat/multimer_dom_body"/>
</dbReference>
<dbReference type="InterPro" id="IPR014729">
    <property type="entry name" value="Rossmann-like_a/b/a_fold"/>
</dbReference>
<dbReference type="NCBIfam" id="TIGR00032">
    <property type="entry name" value="argG"/>
    <property type="match status" value="1"/>
</dbReference>
<dbReference type="NCBIfam" id="NF001770">
    <property type="entry name" value="PRK00509.1"/>
    <property type="match status" value="1"/>
</dbReference>
<dbReference type="PANTHER" id="PTHR11587">
    <property type="entry name" value="ARGININOSUCCINATE SYNTHASE"/>
    <property type="match status" value="1"/>
</dbReference>
<dbReference type="PANTHER" id="PTHR11587:SF2">
    <property type="entry name" value="ARGININOSUCCINATE SYNTHASE"/>
    <property type="match status" value="1"/>
</dbReference>
<dbReference type="Pfam" id="PF20979">
    <property type="entry name" value="Arginosuc_syn_C"/>
    <property type="match status" value="1"/>
</dbReference>
<dbReference type="Pfam" id="PF00764">
    <property type="entry name" value="Arginosuc_synth"/>
    <property type="match status" value="1"/>
</dbReference>
<dbReference type="SUPFAM" id="SSF52402">
    <property type="entry name" value="Adenine nucleotide alpha hydrolases-like"/>
    <property type="match status" value="1"/>
</dbReference>
<dbReference type="SUPFAM" id="SSF69864">
    <property type="entry name" value="Argininosuccinate synthetase, C-terminal domain"/>
    <property type="match status" value="1"/>
</dbReference>
<dbReference type="PROSITE" id="PS00564">
    <property type="entry name" value="ARGININOSUCCIN_SYN_1"/>
    <property type="match status" value="1"/>
</dbReference>
<dbReference type="PROSITE" id="PS00565">
    <property type="entry name" value="ARGININOSUCCIN_SYN_2"/>
    <property type="match status" value="1"/>
</dbReference>
<reference key="1">
    <citation type="journal article" date="2011" name="J. Bacteriol.">
        <title>Complete genome sequence of the plant growth-promoting endophyte Burkholderia phytofirmans strain PsJN.</title>
        <authorList>
            <person name="Weilharter A."/>
            <person name="Mitter B."/>
            <person name="Shin M.V."/>
            <person name="Chain P.S."/>
            <person name="Nowak J."/>
            <person name="Sessitsch A."/>
        </authorList>
    </citation>
    <scope>NUCLEOTIDE SEQUENCE [LARGE SCALE GENOMIC DNA]</scope>
    <source>
        <strain>DSM 17436 / LMG 22146 / PsJN</strain>
    </source>
</reference>
<feature type="chain" id="PRO_1000089025" description="Argininosuccinate synthase">
    <location>
        <begin position="1"/>
        <end position="408"/>
    </location>
</feature>
<feature type="binding site" evidence="1">
    <location>
        <begin position="10"/>
        <end position="18"/>
    </location>
    <ligand>
        <name>ATP</name>
        <dbReference type="ChEBI" id="CHEBI:30616"/>
    </ligand>
</feature>
<feature type="binding site" evidence="1">
    <location>
        <position position="37"/>
    </location>
    <ligand>
        <name>ATP</name>
        <dbReference type="ChEBI" id="CHEBI:30616"/>
    </ligand>
</feature>
<feature type="binding site" evidence="1">
    <location>
        <position position="90"/>
    </location>
    <ligand>
        <name>L-citrulline</name>
        <dbReference type="ChEBI" id="CHEBI:57743"/>
    </ligand>
</feature>
<feature type="binding site" evidence="1">
    <location>
        <position position="95"/>
    </location>
    <ligand>
        <name>L-citrulline</name>
        <dbReference type="ChEBI" id="CHEBI:57743"/>
    </ligand>
</feature>
<feature type="binding site" evidence="1">
    <location>
        <position position="120"/>
    </location>
    <ligand>
        <name>ATP</name>
        <dbReference type="ChEBI" id="CHEBI:30616"/>
    </ligand>
</feature>
<feature type="binding site" evidence="1">
    <location>
        <position position="122"/>
    </location>
    <ligand>
        <name>L-aspartate</name>
        <dbReference type="ChEBI" id="CHEBI:29991"/>
    </ligand>
</feature>
<feature type="binding site" evidence="1">
    <location>
        <position position="126"/>
    </location>
    <ligand>
        <name>L-aspartate</name>
        <dbReference type="ChEBI" id="CHEBI:29991"/>
    </ligand>
</feature>
<feature type="binding site" evidence="1">
    <location>
        <position position="126"/>
    </location>
    <ligand>
        <name>L-citrulline</name>
        <dbReference type="ChEBI" id="CHEBI:57743"/>
    </ligand>
</feature>
<feature type="binding site" evidence="1">
    <location>
        <position position="127"/>
    </location>
    <ligand>
        <name>L-aspartate</name>
        <dbReference type="ChEBI" id="CHEBI:29991"/>
    </ligand>
</feature>
<feature type="binding site" evidence="1">
    <location>
        <position position="130"/>
    </location>
    <ligand>
        <name>L-citrulline</name>
        <dbReference type="ChEBI" id="CHEBI:57743"/>
    </ligand>
</feature>
<feature type="binding site" evidence="1">
    <location>
        <position position="182"/>
    </location>
    <ligand>
        <name>L-citrulline</name>
        <dbReference type="ChEBI" id="CHEBI:57743"/>
    </ligand>
</feature>
<feature type="binding site" evidence="1">
    <location>
        <position position="191"/>
    </location>
    <ligand>
        <name>L-citrulline</name>
        <dbReference type="ChEBI" id="CHEBI:57743"/>
    </ligand>
</feature>
<feature type="binding site" evidence="1">
    <location>
        <position position="267"/>
    </location>
    <ligand>
        <name>L-citrulline</name>
        <dbReference type="ChEBI" id="CHEBI:57743"/>
    </ligand>
</feature>
<feature type="binding site" evidence="1">
    <location>
        <position position="279"/>
    </location>
    <ligand>
        <name>L-citrulline</name>
        <dbReference type="ChEBI" id="CHEBI:57743"/>
    </ligand>
</feature>
<proteinExistence type="inferred from homology"/>
<protein>
    <recommendedName>
        <fullName evidence="1">Argininosuccinate synthase</fullName>
        <ecNumber evidence="1">6.3.4.5</ecNumber>
    </recommendedName>
    <alternativeName>
        <fullName evidence="1">Citrulline--aspartate ligase</fullName>
    </alternativeName>
</protein>
<evidence type="ECO:0000255" key="1">
    <source>
        <dbReference type="HAMAP-Rule" id="MF_00005"/>
    </source>
</evidence>